<dbReference type="EMBL" id="BC103280">
    <property type="protein sequence ID" value="AAI03281.1"/>
    <property type="status" value="ALT_INIT"/>
    <property type="molecule type" value="mRNA"/>
</dbReference>
<dbReference type="RefSeq" id="NP_001160038.1">
    <property type="nucleotide sequence ID" value="NM_001166566.1"/>
</dbReference>
<dbReference type="SMR" id="Q3ZBI3"/>
<dbReference type="FunCoup" id="Q3ZBI3">
    <property type="interactions" value="2794"/>
</dbReference>
<dbReference type="STRING" id="9913.ENSBTAP00000026838"/>
<dbReference type="PaxDb" id="9913-ENSBTAP00000026838"/>
<dbReference type="Ensembl" id="ENSBTAT00000104970.1">
    <property type="protein sequence ID" value="ENSBTAP00000091244.1"/>
    <property type="gene ID" value="ENSBTAG00000020149.6"/>
</dbReference>
<dbReference type="GeneID" id="509258"/>
<dbReference type="KEGG" id="bta:509258"/>
<dbReference type="CTD" id="79621"/>
<dbReference type="VEuPathDB" id="HostDB:ENSBTAG00000020149"/>
<dbReference type="VGNC" id="VGNC:107254">
    <property type="gene designation" value="RNASEH2B"/>
</dbReference>
<dbReference type="eggNOG" id="KOG4705">
    <property type="taxonomic scope" value="Eukaryota"/>
</dbReference>
<dbReference type="GeneTree" id="ENSGT00390000011439"/>
<dbReference type="HOGENOM" id="CLU_059802_0_0_1"/>
<dbReference type="InParanoid" id="Q3ZBI3"/>
<dbReference type="OMA" id="AQWVLIA"/>
<dbReference type="OrthoDB" id="29098at2759"/>
<dbReference type="TreeFam" id="TF105250"/>
<dbReference type="Proteomes" id="UP000009136">
    <property type="component" value="Chromosome 12"/>
</dbReference>
<dbReference type="Bgee" id="ENSBTAG00000020149">
    <property type="expression patterns" value="Expressed in thymus and 106 other cell types or tissues"/>
</dbReference>
<dbReference type="GO" id="GO:0005654">
    <property type="term" value="C:nucleoplasm"/>
    <property type="evidence" value="ECO:0000318"/>
    <property type="project" value="GO_Central"/>
</dbReference>
<dbReference type="GO" id="GO:0032299">
    <property type="term" value="C:ribonuclease H2 complex"/>
    <property type="evidence" value="ECO:0000250"/>
    <property type="project" value="UniProtKB"/>
</dbReference>
<dbReference type="GO" id="GO:0048144">
    <property type="term" value="P:fibroblast proliferation"/>
    <property type="evidence" value="ECO:0007669"/>
    <property type="project" value="Ensembl"/>
</dbReference>
<dbReference type="GO" id="GO:0010467">
    <property type="term" value="P:gene expression"/>
    <property type="evidence" value="ECO:0007669"/>
    <property type="project" value="Ensembl"/>
</dbReference>
<dbReference type="GO" id="GO:0001701">
    <property type="term" value="P:in utero embryonic development"/>
    <property type="evidence" value="ECO:0007669"/>
    <property type="project" value="Ensembl"/>
</dbReference>
<dbReference type="GO" id="GO:0010629">
    <property type="term" value="P:negative regulation of gene expression"/>
    <property type="evidence" value="ECO:0007669"/>
    <property type="project" value="Ensembl"/>
</dbReference>
<dbReference type="GO" id="GO:0048146">
    <property type="term" value="P:positive regulation of fibroblast proliferation"/>
    <property type="evidence" value="ECO:0007669"/>
    <property type="project" value="Ensembl"/>
</dbReference>
<dbReference type="GO" id="GO:2000001">
    <property type="term" value="P:regulation of DNA damage checkpoint"/>
    <property type="evidence" value="ECO:0007669"/>
    <property type="project" value="Ensembl"/>
</dbReference>
<dbReference type="GO" id="GO:0010389">
    <property type="term" value="P:regulation of G2/M transition of mitotic cell cycle"/>
    <property type="evidence" value="ECO:0007669"/>
    <property type="project" value="Ensembl"/>
</dbReference>
<dbReference type="GO" id="GO:0009259">
    <property type="term" value="P:ribonucleotide metabolic process"/>
    <property type="evidence" value="ECO:0007669"/>
    <property type="project" value="Ensembl"/>
</dbReference>
<dbReference type="GO" id="GO:0006401">
    <property type="term" value="P:RNA catabolic process"/>
    <property type="evidence" value="ECO:0000250"/>
    <property type="project" value="UniProtKB"/>
</dbReference>
<dbReference type="CDD" id="cd09270">
    <property type="entry name" value="RNase_H2-B"/>
    <property type="match status" value="1"/>
</dbReference>
<dbReference type="FunFam" id="1.10.20.120:FF:000001">
    <property type="entry name" value="Ribonuclease H2 subunit B"/>
    <property type="match status" value="1"/>
</dbReference>
<dbReference type="FunFam" id="2.20.25.530:FF:000001">
    <property type="entry name" value="Ribonuclease H2 subunit B"/>
    <property type="match status" value="1"/>
</dbReference>
<dbReference type="Gene3D" id="1.10.20.120">
    <property type="match status" value="1"/>
</dbReference>
<dbReference type="Gene3D" id="2.20.25.530">
    <property type="match status" value="1"/>
</dbReference>
<dbReference type="InterPro" id="IPR040456">
    <property type="entry name" value="RNase_H2_suB"/>
</dbReference>
<dbReference type="InterPro" id="IPR019024">
    <property type="entry name" value="RNase_H2_suB_wHTH"/>
</dbReference>
<dbReference type="InterPro" id="IPR041195">
    <property type="entry name" value="Rnh202_N"/>
</dbReference>
<dbReference type="PANTHER" id="PTHR13383">
    <property type="entry name" value="RIBONUCLEASE H2 SUBUNIT B"/>
    <property type="match status" value="1"/>
</dbReference>
<dbReference type="PANTHER" id="PTHR13383:SF11">
    <property type="entry name" value="RIBONUCLEASE H2 SUBUNIT B"/>
    <property type="match status" value="1"/>
</dbReference>
<dbReference type="Pfam" id="PF09468">
    <property type="entry name" value="RNase_H2-Ydr279"/>
    <property type="match status" value="1"/>
</dbReference>
<dbReference type="Pfam" id="PF17745">
    <property type="entry name" value="Ydr279_N"/>
    <property type="match status" value="1"/>
</dbReference>
<gene>
    <name type="primary">RNASEH2B</name>
</gene>
<keyword id="KW-0007">Acetylation</keyword>
<keyword id="KW-0539">Nucleus</keyword>
<keyword id="KW-0597">Phosphoprotein</keyword>
<keyword id="KW-1185">Reference proteome</keyword>
<proteinExistence type="evidence at transcript level"/>
<protein>
    <recommendedName>
        <fullName>Ribonuclease H2 subunit B</fullName>
        <shortName>RNase H2 subunit B</shortName>
    </recommendedName>
    <alternativeName>
        <fullName>Ribonuclease HI subunit B</fullName>
    </alternativeName>
</protein>
<reference key="1">
    <citation type="submission" date="2005-08" db="EMBL/GenBank/DDBJ databases">
        <authorList>
            <consortium name="NIH - Mammalian Gene Collection (MGC) project"/>
        </authorList>
    </citation>
    <scope>NUCLEOTIDE SEQUENCE [LARGE SCALE MRNA]</scope>
    <source>
        <strain>Hereford</strain>
        <tissue>Thymus</tissue>
    </source>
</reference>
<feature type="initiator methionine" description="Removed" evidence="2">
    <location>
        <position position="1"/>
    </location>
</feature>
<feature type="chain" id="PRO_0000248377" description="Ribonuclease H2 subunit B">
    <location>
        <begin position="2"/>
        <end position="309"/>
    </location>
</feature>
<feature type="modified residue" description="N-acetylalanine" evidence="2">
    <location>
        <position position="2"/>
    </location>
</feature>
<feature type="modified residue" description="N6-acetyllysine" evidence="2">
    <location>
        <position position="295"/>
    </location>
</feature>
<feature type="modified residue" description="Phosphoserine" evidence="2">
    <location>
        <position position="296"/>
    </location>
</feature>
<organism>
    <name type="scientific">Bos taurus</name>
    <name type="common">Bovine</name>
    <dbReference type="NCBI Taxonomy" id="9913"/>
    <lineage>
        <taxon>Eukaryota</taxon>
        <taxon>Metazoa</taxon>
        <taxon>Chordata</taxon>
        <taxon>Craniata</taxon>
        <taxon>Vertebrata</taxon>
        <taxon>Euteleostomi</taxon>
        <taxon>Mammalia</taxon>
        <taxon>Eutheria</taxon>
        <taxon>Laurasiatheria</taxon>
        <taxon>Artiodactyla</taxon>
        <taxon>Ruminantia</taxon>
        <taxon>Pecora</taxon>
        <taxon>Bovidae</taxon>
        <taxon>Bovinae</taxon>
        <taxon>Bos</taxon>
    </lineage>
</organism>
<evidence type="ECO:0000250" key="1"/>
<evidence type="ECO:0000250" key="2">
    <source>
        <dbReference type="UniProtKB" id="Q5TBB1"/>
    </source>
</evidence>
<evidence type="ECO:0000305" key="3"/>
<accession>Q3ZBI3</accession>
<comment type="function">
    <text evidence="1">Non catalytic subunit of RNase H2, an endonuclease that specifically degrades the RNA of RNA:DNA hybrids. Participates in DNA replication, possibly by mediating the removal of lagging-strand Okazaki fragment RNA primers during DNA replication. Mediates the excision of single ribonucleotides from DNA:RNA duplexes (By similarity).</text>
</comment>
<comment type="subunit">
    <text evidence="1">The RNase H2 complex is a heterotrimer composed of the catalytic subunit RNASEH2A and the non-catalytic subunits RNASEH2B and RNASEH2C.</text>
</comment>
<comment type="subcellular location">
    <subcellularLocation>
        <location evidence="1">Nucleus</location>
    </subcellularLocation>
</comment>
<comment type="similarity">
    <text evidence="3">Belongs to the RNase H2 subunit B family.</text>
</comment>
<comment type="sequence caution" evidence="3">
    <conflict type="erroneous initiation">
        <sequence resource="EMBL-CDS" id="AAI03281"/>
    </conflict>
    <text>Extended N-terminus.</text>
</comment>
<name>RNH2B_BOVIN</name>
<sequence>MARGADGGDGASVWQHVFLLPEYLKDDSKKMKSGLVFVKLANPCSGEGTIYLFNMCLPQLFEIKVFKEKNHSWFINESVQSGGLLHFATPVDPLFLLLHYLIKADKESFQGKFQPLDQVVMDDMFPDCILLLKLPELEKLLQHVTEEKEVDKKKYYKYSKEKTLKWLGKKVNQTMAALKTNKVNVSARVQSTAFFSGGQVSSDKDEDYVRYAHGLISDYIPKQLSDDLSKYLKLPEPPASVRNPPSKKAKLSDEPVMAKEDYTKFNSKDFKTVKKNSKMTAAQKALAKVDKSGMKSIDSFFGTKHVKKK</sequence>